<gene>
    <name evidence="1" type="primary">kmo</name>
    <name type="ordered locus">MXAN_0916</name>
</gene>
<sequence length="464" mass="50920">MSEARKDTVTVVGAGLVGSLLSIYLARRGHTVELLERRPDMRRETVDGGRSINLAISTRGLHALRQVGLENEALKHAIPMRGRMIHPPQGELVYQPYGKDDSQHINAMSRGWLNAFLMTAAEATGKVRIRFKQRVTDVDFGSGALTVHDDATGEARQEPGRVVFGTDGSASAIRQALEKRPDFKGTQEQLGHGYKELTIPAGPGGAFQMEKHALHIWPRGTFMLIALPDEEGSFTCTLFLPWQGPVSFASLDTPAKLEAFFGAQFPDAKALIPDLVEAFFSRPTGSMVTVKGAPWHAGGQTLLLGDAAHAIVPFFGQGMNCGFEDCVVLDQLLGQGAGWEQVFTDFERLRKTNADAIADMAVENFVEMRDSTGDPRFLFRKAVEKVLLNAFPGEFVSRYSLVSFSHVPYRLAYQMGALTDGIVSELSEGLPRAEDVDLKRAAELIRSRLTPFMKEHADGFRTEG</sequence>
<dbReference type="EC" id="1.14.13.9" evidence="1"/>
<dbReference type="EMBL" id="CP000113">
    <property type="protein sequence ID" value="ABF90126.1"/>
    <property type="molecule type" value="Genomic_DNA"/>
</dbReference>
<dbReference type="RefSeq" id="WP_011551037.1">
    <property type="nucleotide sequence ID" value="NC_008095.1"/>
</dbReference>
<dbReference type="SMR" id="Q1DDU6"/>
<dbReference type="STRING" id="246197.MXAN_0916"/>
<dbReference type="EnsemblBacteria" id="ABF90126">
    <property type="protein sequence ID" value="ABF90126"/>
    <property type="gene ID" value="MXAN_0916"/>
</dbReference>
<dbReference type="GeneID" id="41358375"/>
<dbReference type="KEGG" id="mxa:MXAN_0916"/>
<dbReference type="eggNOG" id="COG0654">
    <property type="taxonomic scope" value="Bacteria"/>
</dbReference>
<dbReference type="HOGENOM" id="CLU_023210_0_1_7"/>
<dbReference type="OrthoDB" id="5487740at2"/>
<dbReference type="UniPathway" id="UPA00253">
    <property type="reaction ID" value="UER00328"/>
</dbReference>
<dbReference type="Proteomes" id="UP000002402">
    <property type="component" value="Chromosome"/>
</dbReference>
<dbReference type="GO" id="GO:0071949">
    <property type="term" value="F:FAD binding"/>
    <property type="evidence" value="ECO:0007669"/>
    <property type="project" value="InterPro"/>
</dbReference>
<dbReference type="GO" id="GO:0004502">
    <property type="term" value="F:kynurenine 3-monooxygenase activity"/>
    <property type="evidence" value="ECO:0007669"/>
    <property type="project" value="UniProtKB-UniRule"/>
</dbReference>
<dbReference type="GO" id="GO:0043420">
    <property type="term" value="P:anthranilate metabolic process"/>
    <property type="evidence" value="ECO:0007669"/>
    <property type="project" value="UniProtKB-UniRule"/>
</dbReference>
<dbReference type="GO" id="GO:0070189">
    <property type="term" value="P:kynurenine metabolic process"/>
    <property type="evidence" value="ECO:0007669"/>
    <property type="project" value="TreeGrafter"/>
</dbReference>
<dbReference type="GO" id="GO:0006569">
    <property type="term" value="P:L-tryptophan catabolic process"/>
    <property type="evidence" value="ECO:0007669"/>
    <property type="project" value="UniProtKB-UniRule"/>
</dbReference>
<dbReference type="GO" id="GO:0009435">
    <property type="term" value="P:NAD biosynthetic process"/>
    <property type="evidence" value="ECO:0007669"/>
    <property type="project" value="UniProtKB-UniPathway"/>
</dbReference>
<dbReference type="GO" id="GO:0019805">
    <property type="term" value="P:quinolinate biosynthetic process"/>
    <property type="evidence" value="ECO:0007669"/>
    <property type="project" value="UniProtKB-UniRule"/>
</dbReference>
<dbReference type="FunFam" id="3.50.50.60:FF:000185">
    <property type="entry name" value="Kynurenine 3-monooxygenase"/>
    <property type="match status" value="1"/>
</dbReference>
<dbReference type="Gene3D" id="3.50.50.60">
    <property type="entry name" value="FAD/NAD(P)-binding domain"/>
    <property type="match status" value="1"/>
</dbReference>
<dbReference type="HAMAP" id="MF_01971">
    <property type="entry name" value="Kynurenine_monooxygenase"/>
    <property type="match status" value="1"/>
</dbReference>
<dbReference type="InterPro" id="IPR002938">
    <property type="entry name" value="FAD-bd"/>
</dbReference>
<dbReference type="InterPro" id="IPR036188">
    <property type="entry name" value="FAD/NAD-bd_sf"/>
</dbReference>
<dbReference type="InterPro" id="IPR027545">
    <property type="entry name" value="Kynurenine_monooxygenase"/>
</dbReference>
<dbReference type="PANTHER" id="PTHR46028">
    <property type="entry name" value="KYNURENINE 3-MONOOXYGENASE"/>
    <property type="match status" value="1"/>
</dbReference>
<dbReference type="PANTHER" id="PTHR46028:SF2">
    <property type="entry name" value="KYNURENINE 3-MONOOXYGENASE"/>
    <property type="match status" value="1"/>
</dbReference>
<dbReference type="Pfam" id="PF01494">
    <property type="entry name" value="FAD_binding_3"/>
    <property type="match status" value="2"/>
</dbReference>
<dbReference type="PRINTS" id="PR00420">
    <property type="entry name" value="RNGMNOXGNASE"/>
</dbReference>
<dbReference type="SUPFAM" id="SSF51905">
    <property type="entry name" value="FAD/NAD(P)-binding domain"/>
    <property type="match status" value="1"/>
</dbReference>
<evidence type="ECO:0000255" key="1">
    <source>
        <dbReference type="HAMAP-Rule" id="MF_01971"/>
    </source>
</evidence>
<organism>
    <name type="scientific">Myxococcus xanthus (strain DK1622)</name>
    <dbReference type="NCBI Taxonomy" id="246197"/>
    <lineage>
        <taxon>Bacteria</taxon>
        <taxon>Pseudomonadati</taxon>
        <taxon>Myxococcota</taxon>
        <taxon>Myxococcia</taxon>
        <taxon>Myxococcales</taxon>
        <taxon>Cystobacterineae</taxon>
        <taxon>Myxococcaceae</taxon>
        <taxon>Myxococcus</taxon>
    </lineage>
</organism>
<feature type="chain" id="PRO_0000361941" description="Kynurenine 3-monooxygenase">
    <location>
        <begin position="1"/>
        <end position="464"/>
    </location>
</feature>
<keyword id="KW-0274">FAD</keyword>
<keyword id="KW-0285">Flavoprotein</keyword>
<keyword id="KW-0503">Monooxygenase</keyword>
<keyword id="KW-0521">NADP</keyword>
<keyword id="KW-0560">Oxidoreductase</keyword>
<keyword id="KW-0662">Pyridine nucleotide biosynthesis</keyword>
<keyword id="KW-1185">Reference proteome</keyword>
<comment type="function">
    <text evidence="1">Catalyzes the hydroxylation of L-kynurenine (L-Kyn) to form 3-hydroxy-L-kynurenine (L-3OHKyn). Required for synthesis of quinolinic acid.</text>
</comment>
<comment type="catalytic activity">
    <reaction evidence="1">
        <text>L-kynurenine + NADPH + O2 + H(+) = 3-hydroxy-L-kynurenine + NADP(+) + H2O</text>
        <dbReference type="Rhea" id="RHEA:20545"/>
        <dbReference type="ChEBI" id="CHEBI:15377"/>
        <dbReference type="ChEBI" id="CHEBI:15378"/>
        <dbReference type="ChEBI" id="CHEBI:15379"/>
        <dbReference type="ChEBI" id="CHEBI:57783"/>
        <dbReference type="ChEBI" id="CHEBI:57959"/>
        <dbReference type="ChEBI" id="CHEBI:58125"/>
        <dbReference type="ChEBI" id="CHEBI:58349"/>
        <dbReference type="EC" id="1.14.13.9"/>
    </reaction>
</comment>
<comment type="cofactor">
    <cofactor evidence="1">
        <name>FAD</name>
        <dbReference type="ChEBI" id="CHEBI:57692"/>
    </cofactor>
</comment>
<comment type="pathway">
    <text evidence="1">Cofactor biosynthesis; NAD(+) biosynthesis; quinolinate from L-kynurenine: step 1/3.</text>
</comment>
<comment type="similarity">
    <text evidence="1">Belongs to the aromatic-ring hydroxylase family. KMO subfamily.</text>
</comment>
<accession>Q1DDU6</accession>
<name>KMO_MYXXD</name>
<reference key="1">
    <citation type="journal article" date="2006" name="Proc. Natl. Acad. Sci. U.S.A.">
        <title>Evolution of sensory complexity recorded in a myxobacterial genome.</title>
        <authorList>
            <person name="Goldman B.S."/>
            <person name="Nierman W.C."/>
            <person name="Kaiser D."/>
            <person name="Slater S.C."/>
            <person name="Durkin A.S."/>
            <person name="Eisen J.A."/>
            <person name="Ronning C.M."/>
            <person name="Barbazuk W.B."/>
            <person name="Blanchard M."/>
            <person name="Field C."/>
            <person name="Halling C."/>
            <person name="Hinkle G."/>
            <person name="Iartchuk O."/>
            <person name="Kim H.S."/>
            <person name="Mackenzie C."/>
            <person name="Madupu R."/>
            <person name="Miller N."/>
            <person name="Shvartsbeyn A."/>
            <person name="Sullivan S.A."/>
            <person name="Vaudin M."/>
            <person name="Wiegand R."/>
            <person name="Kaplan H.B."/>
        </authorList>
    </citation>
    <scope>NUCLEOTIDE SEQUENCE [LARGE SCALE GENOMIC DNA]</scope>
    <source>
        <strain>DK1622</strain>
    </source>
</reference>
<protein>
    <recommendedName>
        <fullName evidence="1">Kynurenine 3-monooxygenase</fullName>
        <ecNumber evidence="1">1.14.13.9</ecNumber>
    </recommendedName>
    <alternativeName>
        <fullName evidence="1">Kynurenine 3-hydroxylase</fullName>
    </alternativeName>
</protein>
<proteinExistence type="inferred from homology"/>